<organism>
    <name type="scientific">Geobacillus thermodenitrificans (strain NG80-2)</name>
    <dbReference type="NCBI Taxonomy" id="420246"/>
    <lineage>
        <taxon>Bacteria</taxon>
        <taxon>Bacillati</taxon>
        <taxon>Bacillota</taxon>
        <taxon>Bacilli</taxon>
        <taxon>Bacillales</taxon>
        <taxon>Anoxybacillaceae</taxon>
        <taxon>Geobacillus</taxon>
    </lineage>
</organism>
<protein>
    <recommendedName>
        <fullName evidence="1">Tryptophan 2,3-dioxygenase</fullName>
        <shortName evidence="1">TDO</shortName>
        <ecNumber evidence="1">1.13.11.11</ecNumber>
    </recommendedName>
    <alternativeName>
        <fullName evidence="1">Tryptamin 2,3-dioxygenase</fullName>
    </alternativeName>
    <alternativeName>
        <fullName evidence="1">Tryptophan oxygenase</fullName>
        <shortName evidence="1">TO</shortName>
        <shortName evidence="1">TRPO</shortName>
    </alternativeName>
    <alternativeName>
        <fullName evidence="1">Tryptophan pyrrolase</fullName>
    </alternativeName>
    <alternativeName>
        <fullName evidence="1">Tryptophanase</fullName>
    </alternativeName>
</protein>
<evidence type="ECO:0000255" key="1">
    <source>
        <dbReference type="HAMAP-Rule" id="MF_01972"/>
    </source>
</evidence>
<proteinExistence type="inferred from homology"/>
<name>T23O_GEOTN</name>
<keyword id="KW-0223">Dioxygenase</keyword>
<keyword id="KW-0349">Heme</keyword>
<keyword id="KW-0408">Iron</keyword>
<keyword id="KW-0479">Metal-binding</keyword>
<keyword id="KW-0560">Oxidoreductase</keyword>
<keyword id="KW-0823">Tryptophan catabolism</keyword>
<accession>A4IT59</accession>
<sequence length="280" mass="32823">MQNKQNQFELEKGIHTDFQEEMSYAGYLQLDKILSSQQRLSNHHDEMLFIIIHQTSELWMKLILHEMEAAIQCILDDDLEPSFKMFARISRIQQQLIQSWSVLSTLTPSEYMEFRECLGHASGFQSYQNRLIEFALGQKNAHVLPVFQHDPEIYEKMTRALHSPSVYDAAIKALAVRGLPIDEDVLHRDYSQTYQPNASVEEAWLTVYRNVDRYWDLYELAEKLVDIGSQQQTWRYMHMNTVERIIGYKKGTGGSSGVSYLKKSLDRSFFPELWTLRTKL</sequence>
<reference key="1">
    <citation type="journal article" date="2007" name="Proc. Natl. Acad. Sci. U.S.A.">
        <title>Genome and proteome of long-chain alkane degrading Geobacillus thermodenitrificans NG80-2 isolated from a deep-subsurface oil reservoir.</title>
        <authorList>
            <person name="Feng L."/>
            <person name="Wang W."/>
            <person name="Cheng J."/>
            <person name="Ren Y."/>
            <person name="Zhao G."/>
            <person name="Gao C."/>
            <person name="Tang Y."/>
            <person name="Liu X."/>
            <person name="Han W."/>
            <person name="Peng X."/>
            <person name="Liu R."/>
            <person name="Wang L."/>
        </authorList>
    </citation>
    <scope>NUCLEOTIDE SEQUENCE [LARGE SCALE GENOMIC DNA]</scope>
    <source>
        <strain>NG80-2</strain>
    </source>
</reference>
<dbReference type="EC" id="1.13.11.11" evidence="1"/>
<dbReference type="EMBL" id="CP000557">
    <property type="protein sequence ID" value="ABO68513.1"/>
    <property type="molecule type" value="Genomic_DNA"/>
</dbReference>
<dbReference type="RefSeq" id="WP_008881314.1">
    <property type="nucleotide sequence ID" value="NC_009328.1"/>
</dbReference>
<dbReference type="SMR" id="A4IT59"/>
<dbReference type="GeneID" id="87622708"/>
<dbReference type="KEGG" id="gtn:GTNG_3168"/>
<dbReference type="eggNOG" id="COG3483">
    <property type="taxonomic scope" value="Bacteria"/>
</dbReference>
<dbReference type="HOGENOM" id="CLU_063240_0_0_9"/>
<dbReference type="UniPathway" id="UPA00333">
    <property type="reaction ID" value="UER00453"/>
</dbReference>
<dbReference type="Proteomes" id="UP000001578">
    <property type="component" value="Chromosome"/>
</dbReference>
<dbReference type="GO" id="GO:0020037">
    <property type="term" value="F:heme binding"/>
    <property type="evidence" value="ECO:0000250"/>
    <property type="project" value="UniProtKB"/>
</dbReference>
<dbReference type="GO" id="GO:0046872">
    <property type="term" value="F:metal ion binding"/>
    <property type="evidence" value="ECO:0007669"/>
    <property type="project" value="UniProtKB-KW"/>
</dbReference>
<dbReference type="GO" id="GO:0004833">
    <property type="term" value="F:tryptophan 2,3-dioxygenase activity"/>
    <property type="evidence" value="ECO:0000250"/>
    <property type="project" value="UniProtKB"/>
</dbReference>
<dbReference type="GO" id="GO:0019442">
    <property type="term" value="P:L-tryptophan catabolic process to acetyl-CoA"/>
    <property type="evidence" value="ECO:0007669"/>
    <property type="project" value="TreeGrafter"/>
</dbReference>
<dbReference type="GO" id="GO:0019441">
    <property type="term" value="P:L-tryptophan catabolic process to kynurenine"/>
    <property type="evidence" value="ECO:0000250"/>
    <property type="project" value="UniProtKB"/>
</dbReference>
<dbReference type="FunFam" id="1.20.58.480:FF:000001">
    <property type="entry name" value="Tryptophan 2,3-dioxygenase"/>
    <property type="match status" value="1"/>
</dbReference>
<dbReference type="Gene3D" id="1.20.58.480">
    <property type="match status" value="1"/>
</dbReference>
<dbReference type="HAMAP" id="MF_01972">
    <property type="entry name" value="T23O"/>
    <property type="match status" value="1"/>
</dbReference>
<dbReference type="InterPro" id="IPR037217">
    <property type="entry name" value="Trp/Indoleamine_2_3_dOase-like"/>
</dbReference>
<dbReference type="InterPro" id="IPR017485">
    <property type="entry name" value="Trp_2-3-dOase_bac"/>
</dbReference>
<dbReference type="InterPro" id="IPR004981">
    <property type="entry name" value="Trp_2_3_dOase"/>
</dbReference>
<dbReference type="NCBIfam" id="TIGR03036">
    <property type="entry name" value="trp_2_3_diox"/>
    <property type="match status" value="1"/>
</dbReference>
<dbReference type="PANTHER" id="PTHR10138">
    <property type="entry name" value="TRYPTOPHAN 2,3-DIOXYGENASE"/>
    <property type="match status" value="1"/>
</dbReference>
<dbReference type="PANTHER" id="PTHR10138:SF0">
    <property type="entry name" value="TRYPTOPHAN 2,3-DIOXYGENASE"/>
    <property type="match status" value="1"/>
</dbReference>
<dbReference type="Pfam" id="PF03301">
    <property type="entry name" value="Trp_dioxygenase"/>
    <property type="match status" value="1"/>
</dbReference>
<dbReference type="SUPFAM" id="SSF140959">
    <property type="entry name" value="Indolic compounds 2,3-dioxygenase-like"/>
    <property type="match status" value="1"/>
</dbReference>
<feature type="chain" id="PRO_0000360116" description="Tryptophan 2,3-dioxygenase">
    <location>
        <begin position="1"/>
        <end position="280"/>
    </location>
</feature>
<feature type="binding site" evidence="1">
    <location>
        <begin position="49"/>
        <end position="53"/>
    </location>
    <ligand>
        <name>substrate</name>
    </ligand>
</feature>
<feature type="binding site" evidence="1">
    <location>
        <position position="111"/>
    </location>
    <ligand>
        <name>substrate</name>
    </ligand>
</feature>
<feature type="binding site" evidence="1">
    <location>
        <position position="115"/>
    </location>
    <ligand>
        <name>substrate</name>
    </ligand>
</feature>
<feature type="binding site" description="axial binding residue" evidence="1">
    <location>
        <position position="238"/>
    </location>
    <ligand>
        <name>heme</name>
        <dbReference type="ChEBI" id="CHEBI:30413"/>
    </ligand>
    <ligandPart>
        <name>Fe</name>
        <dbReference type="ChEBI" id="CHEBI:18248"/>
    </ligandPart>
</feature>
<feature type="binding site" evidence="1">
    <location>
        <position position="252"/>
    </location>
    <ligand>
        <name>substrate</name>
    </ligand>
</feature>
<comment type="function">
    <text evidence="1">Heme-dependent dioxygenase that catalyzes the oxidative cleavage of the L-tryptophan (L-Trp) pyrrole ring and converts L-tryptophan to N-formyl-L-kynurenine. Catalyzes the oxidative cleavage of the indole moiety.</text>
</comment>
<comment type="catalytic activity">
    <reaction evidence="1">
        <text>L-tryptophan + O2 = N-formyl-L-kynurenine</text>
        <dbReference type="Rhea" id="RHEA:24536"/>
        <dbReference type="ChEBI" id="CHEBI:15379"/>
        <dbReference type="ChEBI" id="CHEBI:57912"/>
        <dbReference type="ChEBI" id="CHEBI:58629"/>
        <dbReference type="EC" id="1.13.11.11"/>
    </reaction>
</comment>
<comment type="cofactor">
    <cofactor evidence="1">
        <name>heme</name>
        <dbReference type="ChEBI" id="CHEBI:30413"/>
    </cofactor>
    <text evidence="1">Binds 1 heme group per subunit.</text>
</comment>
<comment type="pathway">
    <text evidence="1">Amino-acid degradation; L-tryptophan degradation via kynurenine pathway; L-kynurenine from L-tryptophan: step 1/2.</text>
</comment>
<comment type="subunit">
    <text evidence="1">Homotetramer.</text>
</comment>
<comment type="similarity">
    <text evidence="1">Belongs to the tryptophan 2,3-dioxygenase family.</text>
</comment>
<gene>
    <name evidence="1" type="primary">kynA</name>
    <name type="ordered locus">GTNG_3168</name>
</gene>